<reference key="1">
    <citation type="journal article" date="2005" name="Science">
        <title>The transcriptional landscape of the mammalian genome.</title>
        <authorList>
            <person name="Carninci P."/>
            <person name="Kasukawa T."/>
            <person name="Katayama S."/>
            <person name="Gough J."/>
            <person name="Frith M.C."/>
            <person name="Maeda N."/>
            <person name="Oyama R."/>
            <person name="Ravasi T."/>
            <person name="Lenhard B."/>
            <person name="Wells C."/>
            <person name="Kodzius R."/>
            <person name="Shimokawa K."/>
            <person name="Bajic V.B."/>
            <person name="Brenner S.E."/>
            <person name="Batalov S."/>
            <person name="Forrest A.R."/>
            <person name="Zavolan M."/>
            <person name="Davis M.J."/>
            <person name="Wilming L.G."/>
            <person name="Aidinis V."/>
            <person name="Allen J.E."/>
            <person name="Ambesi-Impiombato A."/>
            <person name="Apweiler R."/>
            <person name="Aturaliya R.N."/>
            <person name="Bailey T.L."/>
            <person name="Bansal M."/>
            <person name="Baxter L."/>
            <person name="Beisel K.W."/>
            <person name="Bersano T."/>
            <person name="Bono H."/>
            <person name="Chalk A.M."/>
            <person name="Chiu K.P."/>
            <person name="Choudhary V."/>
            <person name="Christoffels A."/>
            <person name="Clutterbuck D.R."/>
            <person name="Crowe M.L."/>
            <person name="Dalla E."/>
            <person name="Dalrymple B.P."/>
            <person name="de Bono B."/>
            <person name="Della Gatta G."/>
            <person name="di Bernardo D."/>
            <person name="Down T."/>
            <person name="Engstrom P."/>
            <person name="Fagiolini M."/>
            <person name="Faulkner G."/>
            <person name="Fletcher C.F."/>
            <person name="Fukushima T."/>
            <person name="Furuno M."/>
            <person name="Futaki S."/>
            <person name="Gariboldi M."/>
            <person name="Georgii-Hemming P."/>
            <person name="Gingeras T.R."/>
            <person name="Gojobori T."/>
            <person name="Green R.E."/>
            <person name="Gustincich S."/>
            <person name="Harbers M."/>
            <person name="Hayashi Y."/>
            <person name="Hensch T.K."/>
            <person name="Hirokawa N."/>
            <person name="Hill D."/>
            <person name="Huminiecki L."/>
            <person name="Iacono M."/>
            <person name="Ikeo K."/>
            <person name="Iwama A."/>
            <person name="Ishikawa T."/>
            <person name="Jakt M."/>
            <person name="Kanapin A."/>
            <person name="Katoh M."/>
            <person name="Kawasawa Y."/>
            <person name="Kelso J."/>
            <person name="Kitamura H."/>
            <person name="Kitano H."/>
            <person name="Kollias G."/>
            <person name="Krishnan S.P."/>
            <person name="Kruger A."/>
            <person name="Kummerfeld S.K."/>
            <person name="Kurochkin I.V."/>
            <person name="Lareau L.F."/>
            <person name="Lazarevic D."/>
            <person name="Lipovich L."/>
            <person name="Liu J."/>
            <person name="Liuni S."/>
            <person name="McWilliam S."/>
            <person name="Madan Babu M."/>
            <person name="Madera M."/>
            <person name="Marchionni L."/>
            <person name="Matsuda H."/>
            <person name="Matsuzawa S."/>
            <person name="Miki H."/>
            <person name="Mignone F."/>
            <person name="Miyake S."/>
            <person name="Morris K."/>
            <person name="Mottagui-Tabar S."/>
            <person name="Mulder N."/>
            <person name="Nakano N."/>
            <person name="Nakauchi H."/>
            <person name="Ng P."/>
            <person name="Nilsson R."/>
            <person name="Nishiguchi S."/>
            <person name="Nishikawa S."/>
            <person name="Nori F."/>
            <person name="Ohara O."/>
            <person name="Okazaki Y."/>
            <person name="Orlando V."/>
            <person name="Pang K.C."/>
            <person name="Pavan W.J."/>
            <person name="Pavesi G."/>
            <person name="Pesole G."/>
            <person name="Petrovsky N."/>
            <person name="Piazza S."/>
            <person name="Reed J."/>
            <person name="Reid J.F."/>
            <person name="Ring B.Z."/>
            <person name="Ringwald M."/>
            <person name="Rost B."/>
            <person name="Ruan Y."/>
            <person name="Salzberg S.L."/>
            <person name="Sandelin A."/>
            <person name="Schneider C."/>
            <person name="Schoenbach C."/>
            <person name="Sekiguchi K."/>
            <person name="Semple C.A."/>
            <person name="Seno S."/>
            <person name="Sessa L."/>
            <person name="Sheng Y."/>
            <person name="Shibata Y."/>
            <person name="Shimada H."/>
            <person name="Shimada K."/>
            <person name="Silva D."/>
            <person name="Sinclair B."/>
            <person name="Sperling S."/>
            <person name="Stupka E."/>
            <person name="Sugiura K."/>
            <person name="Sultana R."/>
            <person name="Takenaka Y."/>
            <person name="Taki K."/>
            <person name="Tammoja K."/>
            <person name="Tan S.L."/>
            <person name="Tang S."/>
            <person name="Taylor M.S."/>
            <person name="Tegner J."/>
            <person name="Teichmann S.A."/>
            <person name="Ueda H.R."/>
            <person name="van Nimwegen E."/>
            <person name="Verardo R."/>
            <person name="Wei C.L."/>
            <person name="Yagi K."/>
            <person name="Yamanishi H."/>
            <person name="Zabarovsky E."/>
            <person name="Zhu S."/>
            <person name="Zimmer A."/>
            <person name="Hide W."/>
            <person name="Bult C."/>
            <person name="Grimmond S.M."/>
            <person name="Teasdale R.D."/>
            <person name="Liu E.T."/>
            <person name="Brusic V."/>
            <person name="Quackenbush J."/>
            <person name="Wahlestedt C."/>
            <person name="Mattick J.S."/>
            <person name="Hume D.A."/>
            <person name="Kai C."/>
            <person name="Sasaki D."/>
            <person name="Tomaru Y."/>
            <person name="Fukuda S."/>
            <person name="Kanamori-Katayama M."/>
            <person name="Suzuki M."/>
            <person name="Aoki J."/>
            <person name="Arakawa T."/>
            <person name="Iida J."/>
            <person name="Imamura K."/>
            <person name="Itoh M."/>
            <person name="Kato T."/>
            <person name="Kawaji H."/>
            <person name="Kawagashira N."/>
            <person name="Kawashima T."/>
            <person name="Kojima M."/>
            <person name="Kondo S."/>
            <person name="Konno H."/>
            <person name="Nakano K."/>
            <person name="Ninomiya N."/>
            <person name="Nishio T."/>
            <person name="Okada M."/>
            <person name="Plessy C."/>
            <person name="Shibata K."/>
            <person name="Shiraki T."/>
            <person name="Suzuki S."/>
            <person name="Tagami M."/>
            <person name="Waki K."/>
            <person name="Watahiki A."/>
            <person name="Okamura-Oho Y."/>
            <person name="Suzuki H."/>
            <person name="Kawai J."/>
            <person name="Hayashizaki Y."/>
        </authorList>
    </citation>
    <scope>NUCLEOTIDE SEQUENCE [LARGE SCALE MRNA]</scope>
    <source>
        <strain>C57BL/6J</strain>
        <tissue>Pancreas</tissue>
    </source>
</reference>
<reference key="2">
    <citation type="journal article" date="2009" name="PLoS Biol.">
        <title>Lineage-specific biology revealed by a finished genome assembly of the mouse.</title>
        <authorList>
            <person name="Church D.M."/>
            <person name="Goodstadt L."/>
            <person name="Hillier L.W."/>
            <person name="Zody M.C."/>
            <person name="Goldstein S."/>
            <person name="She X."/>
            <person name="Bult C.J."/>
            <person name="Agarwala R."/>
            <person name="Cherry J.L."/>
            <person name="DiCuccio M."/>
            <person name="Hlavina W."/>
            <person name="Kapustin Y."/>
            <person name="Meric P."/>
            <person name="Maglott D."/>
            <person name="Birtle Z."/>
            <person name="Marques A.C."/>
            <person name="Graves T."/>
            <person name="Zhou S."/>
            <person name="Teague B."/>
            <person name="Potamousis K."/>
            <person name="Churas C."/>
            <person name="Place M."/>
            <person name="Herschleb J."/>
            <person name="Runnheim R."/>
            <person name="Forrest D."/>
            <person name="Amos-Landgraf J."/>
            <person name="Schwartz D.C."/>
            <person name="Cheng Z."/>
            <person name="Lindblad-Toh K."/>
            <person name="Eichler E.E."/>
            <person name="Ponting C.P."/>
        </authorList>
    </citation>
    <scope>NUCLEOTIDE SEQUENCE [LARGE SCALE GENOMIC DNA]</scope>
    <source>
        <strain>C57BL/6J</strain>
    </source>
</reference>
<reference key="3">
    <citation type="journal article" date="2010" name="Cell">
        <title>A tissue-specific atlas of mouse protein phosphorylation and expression.</title>
        <authorList>
            <person name="Huttlin E.L."/>
            <person name="Jedrychowski M.P."/>
            <person name="Elias J.E."/>
            <person name="Goswami T."/>
            <person name="Rad R."/>
            <person name="Beausoleil S.A."/>
            <person name="Villen J."/>
            <person name="Haas W."/>
            <person name="Sowa M.E."/>
            <person name="Gygi S.P."/>
        </authorList>
    </citation>
    <scope>PHOSPHORYLATION [LARGE SCALE ANALYSIS] AT SER-218</scope>
    <scope>IDENTIFICATION BY MASS SPECTROMETRY [LARGE SCALE ANALYSIS]</scope>
    <source>
        <tissue>Kidney</tissue>
        <tissue>Pancreas</tissue>
        <tissue>Testis</tissue>
    </source>
</reference>
<reference key="4">
    <citation type="journal article" date="2013" name="Dev. Biol.">
        <title>Forward genetics identifies Kdf1/1810019J16Rik as an essential regulator of the proliferation-differentiation decision in epidermal progenitor cells.</title>
        <authorList>
            <person name="Lee S."/>
            <person name="Kong Y."/>
            <person name="Weatherbee S.D."/>
        </authorList>
    </citation>
    <scope>FUNCTION IN EPIDERMAL DEVELOPMENT</scope>
    <scope>SUBCELLULAR LOCATION</scope>
    <scope>DEVELOPMENTAL STAGE</scope>
</reference>
<feature type="chain" id="PRO_0000289049" description="Keratinocyte differentiation factor 1">
    <location>
        <begin position="1"/>
        <end position="397"/>
    </location>
</feature>
<feature type="region of interest" description="Disordered" evidence="1">
    <location>
        <begin position="1"/>
        <end position="67"/>
    </location>
</feature>
<feature type="region of interest" description="Disordered" evidence="1">
    <location>
        <begin position="130"/>
        <end position="158"/>
    </location>
</feature>
<feature type="region of interest" description="Disordered" evidence="1">
    <location>
        <begin position="192"/>
        <end position="214"/>
    </location>
</feature>
<feature type="region of interest" description="Disordered" evidence="1">
    <location>
        <begin position="304"/>
        <end position="339"/>
    </location>
</feature>
<feature type="region of interest" description="Disordered" evidence="1">
    <location>
        <begin position="361"/>
        <end position="392"/>
    </location>
</feature>
<feature type="compositionally biased region" description="Pro residues" evidence="1">
    <location>
        <begin position="1"/>
        <end position="16"/>
    </location>
</feature>
<feature type="compositionally biased region" description="Basic and acidic residues" evidence="1">
    <location>
        <begin position="44"/>
        <end position="55"/>
    </location>
</feature>
<feature type="compositionally biased region" description="Polar residues" evidence="1">
    <location>
        <begin position="201"/>
        <end position="211"/>
    </location>
</feature>
<feature type="compositionally biased region" description="Low complexity" evidence="1">
    <location>
        <begin position="321"/>
        <end position="330"/>
    </location>
</feature>
<feature type="compositionally biased region" description="Polar residues" evidence="1">
    <location>
        <begin position="375"/>
        <end position="388"/>
    </location>
</feature>
<feature type="modified residue" description="Phosphoserine" evidence="5">
    <location>
        <position position="218"/>
    </location>
</feature>
<sequence length="397" mass="43496">MPRPGQPRPSSGPPRLGPWERPSELCLETNDERSQPPPGRRTRRPDPKDPGHHGPESITFISGSAEPANEPPTCCLLWRPWGWDWCRAAFCFRRCRDCLQRCGACVRGCSPCLSAGDPIEGSAEAAWAKEHNGVPPSPDRAPPSRRDGQRLKTSMGSSFSYPDVKLKGIPVYPYRHATSPVPDVDSCCKEPLAEPPPTRHSLPSTFTNSPRGSEEYYSFHESDLDLPEMGSGSMSSREIDVLIFKKLTELFSVHQIDELAKCTSDTVFLEKTSKISDLISSITQDYHLDEQDAEGRLVRGIIRISTRKSRSRPQTSEGRSARSTAPAAAPDSGHETMLGSGLSQDELTVQISQETTADAIARKLRPYGAPGYPASQDSSFQGTDTDSSGAPLLQVYC</sequence>
<accession>A2A9F4</accession>
<accession>Q8C1Q5</accession>
<keyword id="KW-0965">Cell junction</keyword>
<keyword id="KW-0963">Cytoplasm</keyword>
<keyword id="KW-0217">Developmental protein</keyword>
<keyword id="KW-0221">Differentiation</keyword>
<keyword id="KW-0597">Phosphoprotein</keyword>
<keyword id="KW-1185">Reference proteome</keyword>
<gene>
    <name type="primary">Kdf1</name>
</gene>
<name>KDF1_MOUSE</name>
<protein>
    <recommendedName>
        <fullName>Keratinocyte differentiation factor 1</fullName>
    </recommendedName>
</protein>
<evidence type="ECO:0000256" key="1">
    <source>
        <dbReference type="SAM" id="MobiDB-lite"/>
    </source>
</evidence>
<evidence type="ECO:0000269" key="2">
    <source>
    </source>
</evidence>
<evidence type="ECO:0000305" key="3"/>
<evidence type="ECO:0000305" key="4">
    <source>
    </source>
</evidence>
<evidence type="ECO:0007744" key="5">
    <source>
    </source>
</evidence>
<organism>
    <name type="scientific">Mus musculus</name>
    <name type="common">Mouse</name>
    <dbReference type="NCBI Taxonomy" id="10090"/>
    <lineage>
        <taxon>Eukaryota</taxon>
        <taxon>Metazoa</taxon>
        <taxon>Chordata</taxon>
        <taxon>Craniata</taxon>
        <taxon>Vertebrata</taxon>
        <taxon>Euteleostomi</taxon>
        <taxon>Mammalia</taxon>
        <taxon>Eutheria</taxon>
        <taxon>Euarchontoglires</taxon>
        <taxon>Glires</taxon>
        <taxon>Rodentia</taxon>
        <taxon>Myomorpha</taxon>
        <taxon>Muroidea</taxon>
        <taxon>Muridae</taxon>
        <taxon>Murinae</taxon>
        <taxon>Mus</taxon>
        <taxon>Mus</taxon>
    </lineage>
</organism>
<comment type="function">
    <text evidence="2">Plays a role in the regulation of the epidermis formation during early development. Required both as an inhibitor of basal cell proliferation and a promoter of differentiation of basal progenitor cell progeny.</text>
</comment>
<comment type="subcellular location">
    <subcellularLocation>
        <location evidence="2">Cytoplasm</location>
    </subcellularLocation>
    <subcellularLocation>
        <location evidence="2">Cell junction</location>
    </subcellularLocation>
    <text>Localized at cell borders in single layered keratinocytes. Localized at cell borders in the basal and spinous layers but is more diffusely localized in the granular layer. Colocalized with actin near the cell membrane, especially in cellular protrusions.</text>
</comment>
<comment type="developmental stage">
    <text evidence="2">Expressed in basal and suprabasal layers of the epidermis as well as within the developing hair follicles and the lumen of the esophagus at 18 dpc.</text>
</comment>
<comment type="miscellaneous">
    <text evidence="4">Shorthand (Shd), a recessive ethylnitrosurea-induced mutant with a frameshift that results in a longer protein with the C-terminal being out of frame. Shd displays shortened and fused limbs and craniofacial malformations, including shortened snout at 12.5 dpc. The affected mice display a thickened epidermis with increased basal keratinocyte proliferation and poorly-differentiated epidermal cells that fail to form a normal barrier at 18.5 dpc. Shd homozygotes died at birth, likely due to the epidermis covering the mouth and nose openings, preventing respiration (PubMed:24075906).</text>
</comment>
<comment type="sequence caution" evidence="3">
    <conflict type="frameshift">
        <sequence resource="EMBL-CDS" id="BAC25177"/>
    </conflict>
</comment>
<dbReference type="EMBL" id="AK007551">
    <property type="protein sequence ID" value="BAC25177.1"/>
    <property type="status" value="ALT_FRAME"/>
    <property type="molecule type" value="mRNA"/>
</dbReference>
<dbReference type="EMBL" id="AL627228">
    <property type="status" value="NOT_ANNOTATED_CDS"/>
    <property type="molecule type" value="Genomic_DNA"/>
</dbReference>
<dbReference type="CCDS" id="CCDS38905.1"/>
<dbReference type="RefSeq" id="NP_001077385.1">
    <property type="nucleotide sequence ID" value="NM_001083916.1"/>
</dbReference>
<dbReference type="RefSeq" id="NP_598468.2">
    <property type="nucleotide sequence ID" value="NM_133707.2"/>
</dbReference>
<dbReference type="RefSeq" id="XP_006539213.1">
    <property type="nucleotide sequence ID" value="XM_006539150.5"/>
</dbReference>
<dbReference type="RefSeq" id="XP_006539214.1">
    <property type="nucleotide sequence ID" value="XM_006539151.5"/>
</dbReference>
<dbReference type="FunCoup" id="A2A9F4">
    <property type="interactions" value="119"/>
</dbReference>
<dbReference type="STRING" id="10090.ENSMUSP00000048768"/>
<dbReference type="iPTMnet" id="A2A9F4"/>
<dbReference type="PhosphoSitePlus" id="A2A9F4"/>
<dbReference type="PaxDb" id="10090-ENSMUSP00000101521"/>
<dbReference type="ProteomicsDB" id="269212"/>
<dbReference type="Antibodypedia" id="30716">
    <property type="antibodies" value="96 antibodies from 12 providers"/>
</dbReference>
<dbReference type="Ensembl" id="ENSMUST00000042919.16">
    <property type="protein sequence ID" value="ENSMUSP00000048768.10"/>
    <property type="gene ID" value="ENSMUSG00000037600.17"/>
</dbReference>
<dbReference type="Ensembl" id="ENSMUST00000105901.2">
    <property type="protein sequence ID" value="ENSMUSP00000101521.2"/>
    <property type="gene ID" value="ENSMUSG00000037600.17"/>
</dbReference>
<dbReference type="GeneID" id="69073"/>
<dbReference type="KEGG" id="mmu:69073"/>
<dbReference type="UCSC" id="uc008vcw.1">
    <property type="organism name" value="mouse"/>
</dbReference>
<dbReference type="AGR" id="MGI:1916323"/>
<dbReference type="CTD" id="126695"/>
<dbReference type="MGI" id="MGI:1916323">
    <property type="gene designation" value="Kdf1"/>
</dbReference>
<dbReference type="VEuPathDB" id="HostDB:ENSMUSG00000037600"/>
<dbReference type="eggNOG" id="ENOG502QQ0M">
    <property type="taxonomic scope" value="Eukaryota"/>
</dbReference>
<dbReference type="GeneTree" id="ENSGT00390000016565"/>
<dbReference type="HOGENOM" id="CLU_058054_2_0_1"/>
<dbReference type="InParanoid" id="A2A9F4"/>
<dbReference type="OMA" id="WSKEHNG"/>
<dbReference type="OrthoDB" id="8640515at2759"/>
<dbReference type="PhylomeDB" id="A2A9F4"/>
<dbReference type="TreeFam" id="TF336538"/>
<dbReference type="BioGRID-ORCS" id="69073">
    <property type="hits" value="0 hits in 77 CRISPR screens"/>
</dbReference>
<dbReference type="PRO" id="PR:A2A9F4"/>
<dbReference type="Proteomes" id="UP000000589">
    <property type="component" value="Chromosome 4"/>
</dbReference>
<dbReference type="RNAct" id="A2A9F4">
    <property type="molecule type" value="protein"/>
</dbReference>
<dbReference type="Bgee" id="ENSMUSG00000037600">
    <property type="expression patterns" value="Expressed in seminal vesicle and 154 other cell types or tissues"/>
</dbReference>
<dbReference type="ExpressionAtlas" id="A2A9F4">
    <property type="expression patterns" value="baseline and differential"/>
</dbReference>
<dbReference type="GO" id="GO:0070161">
    <property type="term" value="C:anchoring junction"/>
    <property type="evidence" value="ECO:0007669"/>
    <property type="project" value="UniProtKB-SubCell"/>
</dbReference>
<dbReference type="GO" id="GO:0005938">
    <property type="term" value="C:cell cortex"/>
    <property type="evidence" value="ECO:0000314"/>
    <property type="project" value="MGI"/>
</dbReference>
<dbReference type="GO" id="GO:0030054">
    <property type="term" value="C:cell junction"/>
    <property type="evidence" value="ECO:0000314"/>
    <property type="project" value="UniProtKB"/>
</dbReference>
<dbReference type="GO" id="GO:0031252">
    <property type="term" value="C:cell leading edge"/>
    <property type="evidence" value="ECO:0000314"/>
    <property type="project" value="MGI"/>
</dbReference>
<dbReference type="GO" id="GO:0005737">
    <property type="term" value="C:cytoplasm"/>
    <property type="evidence" value="ECO:0000314"/>
    <property type="project" value="UniProtKB"/>
</dbReference>
<dbReference type="GO" id="GO:0048589">
    <property type="term" value="P:developmental growth"/>
    <property type="evidence" value="ECO:0000315"/>
    <property type="project" value="UniProtKB"/>
</dbReference>
<dbReference type="GO" id="GO:0009913">
    <property type="term" value="P:epidermal cell differentiation"/>
    <property type="evidence" value="ECO:0000315"/>
    <property type="project" value="MGI"/>
</dbReference>
<dbReference type="GO" id="GO:0061436">
    <property type="term" value="P:establishment of skin barrier"/>
    <property type="evidence" value="ECO:0000315"/>
    <property type="project" value="UniProtKB"/>
</dbReference>
<dbReference type="GO" id="GO:0003334">
    <property type="term" value="P:keratinocyte development"/>
    <property type="evidence" value="ECO:0000315"/>
    <property type="project" value="MGI"/>
</dbReference>
<dbReference type="GO" id="GO:0043616">
    <property type="term" value="P:keratinocyte proliferation"/>
    <property type="evidence" value="ECO:0000315"/>
    <property type="project" value="MGI"/>
</dbReference>
<dbReference type="GO" id="GO:0060887">
    <property type="term" value="P:limb epidermis development"/>
    <property type="evidence" value="ECO:0000315"/>
    <property type="project" value="UniProtKB"/>
</dbReference>
<dbReference type="GO" id="GO:0016331">
    <property type="term" value="P:morphogenesis of embryonic epithelium"/>
    <property type="evidence" value="ECO:0000315"/>
    <property type="project" value="UniProtKB"/>
</dbReference>
<dbReference type="GO" id="GO:0010839">
    <property type="term" value="P:negative regulation of keratinocyte proliferation"/>
    <property type="evidence" value="ECO:0000315"/>
    <property type="project" value="MGI"/>
</dbReference>
<dbReference type="GO" id="GO:2000647">
    <property type="term" value="P:negative regulation of stem cell proliferation"/>
    <property type="evidence" value="ECO:0000315"/>
    <property type="project" value="UniProtKB"/>
</dbReference>
<dbReference type="GO" id="GO:0045606">
    <property type="term" value="P:positive regulation of epidermal cell differentiation"/>
    <property type="evidence" value="ECO:0000315"/>
    <property type="project" value="UniProtKB"/>
</dbReference>
<dbReference type="GO" id="GO:0016579">
    <property type="term" value="P:protein deubiquitination"/>
    <property type="evidence" value="ECO:0000315"/>
    <property type="project" value="MGI"/>
</dbReference>
<dbReference type="GO" id="GO:0050821">
    <property type="term" value="P:protein stabilization"/>
    <property type="evidence" value="ECO:0000315"/>
    <property type="project" value="MGI"/>
</dbReference>
<dbReference type="GO" id="GO:0010482">
    <property type="term" value="P:regulation of epidermal cell division"/>
    <property type="evidence" value="ECO:0000315"/>
    <property type="project" value="UniProtKB"/>
</dbReference>
<dbReference type="GO" id="GO:0043588">
    <property type="term" value="P:skin development"/>
    <property type="evidence" value="ECO:0000315"/>
    <property type="project" value="MGI"/>
</dbReference>
<dbReference type="GO" id="GO:0072089">
    <property type="term" value="P:stem cell proliferation"/>
    <property type="evidence" value="ECO:0000315"/>
    <property type="project" value="MGI"/>
</dbReference>
<dbReference type="InterPro" id="IPR028003">
    <property type="entry name" value="KDF1"/>
</dbReference>
<dbReference type="PANTHER" id="PTHR35085">
    <property type="entry name" value="KERATINOCYTE DIFFERENTIATION FACTOR 1"/>
    <property type="match status" value="1"/>
</dbReference>
<dbReference type="PANTHER" id="PTHR35085:SF1">
    <property type="entry name" value="KERATINOCYTE DIFFERENTIATION FACTOR 1"/>
    <property type="match status" value="1"/>
</dbReference>
<dbReference type="Pfam" id="PF15551">
    <property type="entry name" value="DUF4656"/>
    <property type="match status" value="1"/>
</dbReference>
<proteinExistence type="evidence at protein level"/>